<organism>
    <name type="scientific">Rickettsia bellii (strain OSU 85-389)</name>
    <dbReference type="NCBI Taxonomy" id="391896"/>
    <lineage>
        <taxon>Bacteria</taxon>
        <taxon>Pseudomonadati</taxon>
        <taxon>Pseudomonadota</taxon>
        <taxon>Alphaproteobacteria</taxon>
        <taxon>Rickettsiales</taxon>
        <taxon>Rickettsiaceae</taxon>
        <taxon>Rickettsieae</taxon>
        <taxon>Rickettsia</taxon>
        <taxon>belli group</taxon>
    </lineage>
</organism>
<comment type="function">
    <text evidence="1">Cell wall formation.</text>
</comment>
<comment type="catalytic activity">
    <reaction evidence="1">
        <text>UDP-N-acetyl-alpha-D-muramate + NADP(+) = UDP-N-acetyl-3-O-(1-carboxyvinyl)-alpha-D-glucosamine + NADPH + H(+)</text>
        <dbReference type="Rhea" id="RHEA:12248"/>
        <dbReference type="ChEBI" id="CHEBI:15378"/>
        <dbReference type="ChEBI" id="CHEBI:57783"/>
        <dbReference type="ChEBI" id="CHEBI:58349"/>
        <dbReference type="ChEBI" id="CHEBI:68483"/>
        <dbReference type="ChEBI" id="CHEBI:70757"/>
        <dbReference type="EC" id="1.3.1.98"/>
    </reaction>
</comment>
<comment type="cofactor">
    <cofactor evidence="1">
        <name>FAD</name>
        <dbReference type="ChEBI" id="CHEBI:57692"/>
    </cofactor>
</comment>
<comment type="pathway">
    <text evidence="1">Cell wall biogenesis; peptidoglycan biosynthesis.</text>
</comment>
<comment type="subcellular location">
    <subcellularLocation>
        <location evidence="1">Cytoplasm</location>
    </subcellularLocation>
</comment>
<comment type="similarity">
    <text evidence="1">Belongs to the MurB family.</text>
</comment>
<feature type="chain" id="PRO_1000002908" description="UDP-N-acetylenolpyruvoylglucosamine reductase">
    <location>
        <begin position="1"/>
        <end position="310"/>
    </location>
</feature>
<feature type="domain" description="FAD-binding PCMH-type" evidence="1">
    <location>
        <begin position="23"/>
        <end position="188"/>
    </location>
</feature>
<feature type="active site" evidence="1">
    <location>
        <position position="168"/>
    </location>
</feature>
<feature type="active site" description="Proton donor" evidence="1">
    <location>
        <position position="217"/>
    </location>
</feature>
<feature type="active site" evidence="1">
    <location>
        <position position="287"/>
    </location>
</feature>
<evidence type="ECO:0000255" key="1">
    <source>
        <dbReference type="HAMAP-Rule" id="MF_00037"/>
    </source>
</evidence>
<protein>
    <recommendedName>
        <fullName evidence="1">UDP-N-acetylenolpyruvoylglucosamine reductase</fullName>
        <ecNumber evidence="1">1.3.1.98</ecNumber>
    </recommendedName>
    <alternativeName>
        <fullName evidence="1">UDP-N-acetylmuramate dehydrogenase</fullName>
    </alternativeName>
</protein>
<accession>A8GW95</accession>
<keyword id="KW-0131">Cell cycle</keyword>
<keyword id="KW-0132">Cell division</keyword>
<keyword id="KW-0133">Cell shape</keyword>
<keyword id="KW-0961">Cell wall biogenesis/degradation</keyword>
<keyword id="KW-0963">Cytoplasm</keyword>
<keyword id="KW-0274">FAD</keyword>
<keyword id="KW-0285">Flavoprotein</keyword>
<keyword id="KW-0521">NADP</keyword>
<keyword id="KW-0560">Oxidoreductase</keyword>
<keyword id="KW-0573">Peptidoglycan synthesis</keyword>
<reference key="1">
    <citation type="submission" date="2007-09" db="EMBL/GenBank/DDBJ databases">
        <title>Complete genome sequencing of Rickettsia bellii.</title>
        <authorList>
            <person name="Madan A."/>
            <person name="Lee H."/>
            <person name="Madan A."/>
            <person name="Yoon J.-G."/>
            <person name="Ryu G.-Y."/>
            <person name="Dasch G."/>
            <person name="Ereemeva M."/>
        </authorList>
    </citation>
    <scope>NUCLEOTIDE SEQUENCE [LARGE SCALE GENOMIC DNA]</scope>
    <source>
        <strain>OSU 85-389</strain>
    </source>
</reference>
<dbReference type="EC" id="1.3.1.98" evidence="1"/>
<dbReference type="EMBL" id="CP000849">
    <property type="protein sequence ID" value="ABV79122.1"/>
    <property type="molecule type" value="Genomic_DNA"/>
</dbReference>
<dbReference type="RefSeq" id="WP_012151852.1">
    <property type="nucleotide sequence ID" value="NC_009883.1"/>
</dbReference>
<dbReference type="SMR" id="A8GW95"/>
<dbReference type="KEGG" id="rbo:A1I_03845"/>
<dbReference type="HOGENOM" id="CLU_035304_1_0_5"/>
<dbReference type="UniPathway" id="UPA00219"/>
<dbReference type="GO" id="GO:0005829">
    <property type="term" value="C:cytosol"/>
    <property type="evidence" value="ECO:0007669"/>
    <property type="project" value="TreeGrafter"/>
</dbReference>
<dbReference type="GO" id="GO:0071949">
    <property type="term" value="F:FAD binding"/>
    <property type="evidence" value="ECO:0007669"/>
    <property type="project" value="InterPro"/>
</dbReference>
<dbReference type="GO" id="GO:0008762">
    <property type="term" value="F:UDP-N-acetylmuramate dehydrogenase activity"/>
    <property type="evidence" value="ECO:0007669"/>
    <property type="project" value="UniProtKB-UniRule"/>
</dbReference>
<dbReference type="GO" id="GO:0051301">
    <property type="term" value="P:cell division"/>
    <property type="evidence" value="ECO:0007669"/>
    <property type="project" value="UniProtKB-KW"/>
</dbReference>
<dbReference type="GO" id="GO:0071555">
    <property type="term" value="P:cell wall organization"/>
    <property type="evidence" value="ECO:0007669"/>
    <property type="project" value="UniProtKB-KW"/>
</dbReference>
<dbReference type="GO" id="GO:0009252">
    <property type="term" value="P:peptidoglycan biosynthetic process"/>
    <property type="evidence" value="ECO:0007669"/>
    <property type="project" value="UniProtKB-UniRule"/>
</dbReference>
<dbReference type="GO" id="GO:0008360">
    <property type="term" value="P:regulation of cell shape"/>
    <property type="evidence" value="ECO:0007669"/>
    <property type="project" value="UniProtKB-KW"/>
</dbReference>
<dbReference type="Gene3D" id="3.30.465.10">
    <property type="match status" value="1"/>
</dbReference>
<dbReference type="Gene3D" id="3.90.78.10">
    <property type="entry name" value="UDP-N-acetylenolpyruvoylglucosamine reductase, C-terminal domain"/>
    <property type="match status" value="1"/>
</dbReference>
<dbReference type="Gene3D" id="3.30.43.10">
    <property type="entry name" value="Uridine Diphospho-n-acetylenolpyruvylglucosamine Reductase, domain 2"/>
    <property type="match status" value="1"/>
</dbReference>
<dbReference type="HAMAP" id="MF_00037">
    <property type="entry name" value="MurB"/>
    <property type="match status" value="1"/>
</dbReference>
<dbReference type="InterPro" id="IPR016166">
    <property type="entry name" value="FAD-bd_PCMH"/>
</dbReference>
<dbReference type="InterPro" id="IPR036318">
    <property type="entry name" value="FAD-bd_PCMH-like_sf"/>
</dbReference>
<dbReference type="InterPro" id="IPR016167">
    <property type="entry name" value="FAD-bd_PCMH_sub1"/>
</dbReference>
<dbReference type="InterPro" id="IPR016169">
    <property type="entry name" value="FAD-bd_PCMH_sub2"/>
</dbReference>
<dbReference type="InterPro" id="IPR003170">
    <property type="entry name" value="MurB"/>
</dbReference>
<dbReference type="InterPro" id="IPR011601">
    <property type="entry name" value="MurB_C"/>
</dbReference>
<dbReference type="InterPro" id="IPR036635">
    <property type="entry name" value="MurB_C_sf"/>
</dbReference>
<dbReference type="InterPro" id="IPR006094">
    <property type="entry name" value="Oxid_FAD_bind_N"/>
</dbReference>
<dbReference type="NCBIfam" id="TIGR00179">
    <property type="entry name" value="murB"/>
    <property type="match status" value="1"/>
</dbReference>
<dbReference type="NCBIfam" id="NF010480">
    <property type="entry name" value="PRK13905.1"/>
    <property type="match status" value="1"/>
</dbReference>
<dbReference type="PANTHER" id="PTHR21071">
    <property type="entry name" value="UDP-N-ACETYLENOLPYRUVOYLGLUCOSAMINE REDUCTASE"/>
    <property type="match status" value="1"/>
</dbReference>
<dbReference type="PANTHER" id="PTHR21071:SF4">
    <property type="entry name" value="UDP-N-ACETYLENOLPYRUVOYLGLUCOSAMINE REDUCTASE"/>
    <property type="match status" value="1"/>
</dbReference>
<dbReference type="Pfam" id="PF01565">
    <property type="entry name" value="FAD_binding_4"/>
    <property type="match status" value="1"/>
</dbReference>
<dbReference type="Pfam" id="PF02873">
    <property type="entry name" value="MurB_C"/>
    <property type="match status" value="1"/>
</dbReference>
<dbReference type="SUPFAM" id="SSF56176">
    <property type="entry name" value="FAD-binding/transporter-associated domain-like"/>
    <property type="match status" value="1"/>
</dbReference>
<dbReference type="SUPFAM" id="SSF56194">
    <property type="entry name" value="Uridine diphospho-N-Acetylenolpyruvylglucosamine reductase, MurB, C-terminal domain"/>
    <property type="match status" value="1"/>
</dbReference>
<dbReference type="PROSITE" id="PS51387">
    <property type="entry name" value="FAD_PCMH"/>
    <property type="match status" value="1"/>
</dbReference>
<name>MURB_RICB8</name>
<gene>
    <name evidence="1" type="primary">murB</name>
    <name type="ordered locus">A1I_03845</name>
</gene>
<proteinExistence type="inferred from homology"/>
<sequence>MNLPIVKGEYRKDYNLKHLTWFKVGGNAEIFFKPVDSEDLASFLVQNKQKLPITTFGAGSNIIIRDGGIEGVTIKLGQNFSNIGFTDDGHLIVGSSCLNFSLAKFCQVNAISGFEFLVGIPGTIGGGVAMNAGAYGCEFKDILVRIEAIDFAGNFRTFTNEEIGFKYRGNNLPKDLIILKAVFKVNKGNSEDILARMNEINAARSSTQPIKERTGGSTFANPEGFKSWQLIDKAGLRGYRIGDASISELHCNFMINNGNATAKELEDLGNFVQQKVFEDSGIKLNWEIKRIGKVSSRAWLDHGIQRKIIK</sequence>